<accession>Q5HNR6</accession>
<organism>
    <name type="scientific">Staphylococcus epidermidis (strain ATCC 35984 / DSM 28319 / BCRC 17069 / CCUG 31568 / BM 3577 / RP62A)</name>
    <dbReference type="NCBI Taxonomy" id="176279"/>
    <lineage>
        <taxon>Bacteria</taxon>
        <taxon>Bacillati</taxon>
        <taxon>Bacillota</taxon>
        <taxon>Bacilli</taxon>
        <taxon>Bacillales</taxon>
        <taxon>Staphylococcaceae</taxon>
        <taxon>Staphylococcus</taxon>
    </lineage>
</organism>
<name>APT_STAEQ</name>
<reference key="1">
    <citation type="journal article" date="2005" name="J. Bacteriol.">
        <title>Insights on evolution of virulence and resistance from the complete genome analysis of an early methicillin-resistant Staphylococcus aureus strain and a biofilm-producing methicillin-resistant Staphylococcus epidermidis strain.</title>
        <authorList>
            <person name="Gill S.R."/>
            <person name="Fouts D.E."/>
            <person name="Archer G.L."/>
            <person name="Mongodin E.F."/>
            <person name="DeBoy R.T."/>
            <person name="Ravel J."/>
            <person name="Paulsen I.T."/>
            <person name="Kolonay J.F."/>
            <person name="Brinkac L.M."/>
            <person name="Beanan M.J."/>
            <person name="Dodson R.J."/>
            <person name="Daugherty S.C."/>
            <person name="Madupu R."/>
            <person name="Angiuoli S.V."/>
            <person name="Durkin A.S."/>
            <person name="Haft D.H."/>
            <person name="Vamathevan J.J."/>
            <person name="Khouri H."/>
            <person name="Utterback T.R."/>
            <person name="Lee C."/>
            <person name="Dimitrov G."/>
            <person name="Jiang L."/>
            <person name="Qin H."/>
            <person name="Weidman J."/>
            <person name="Tran K."/>
            <person name="Kang K.H."/>
            <person name="Hance I.R."/>
            <person name="Nelson K.E."/>
            <person name="Fraser C.M."/>
        </authorList>
    </citation>
    <scope>NUCLEOTIDE SEQUENCE [LARGE SCALE GENOMIC DNA]</scope>
    <source>
        <strain>ATCC 35984 / DSM 28319 / BCRC 17069 / CCUG 31568 / BM 3577 / RP62A</strain>
    </source>
</reference>
<feature type="chain" id="PRO_0000149457" description="Adenine phosphoribosyltransferase">
    <location>
        <begin position="1"/>
        <end position="172"/>
    </location>
</feature>
<comment type="function">
    <text evidence="1">Catalyzes a salvage reaction resulting in the formation of AMP, that is energically less costly than de novo synthesis.</text>
</comment>
<comment type="catalytic activity">
    <reaction evidence="1">
        <text>AMP + diphosphate = 5-phospho-alpha-D-ribose 1-diphosphate + adenine</text>
        <dbReference type="Rhea" id="RHEA:16609"/>
        <dbReference type="ChEBI" id="CHEBI:16708"/>
        <dbReference type="ChEBI" id="CHEBI:33019"/>
        <dbReference type="ChEBI" id="CHEBI:58017"/>
        <dbReference type="ChEBI" id="CHEBI:456215"/>
        <dbReference type="EC" id="2.4.2.7"/>
    </reaction>
</comment>
<comment type="pathway">
    <text evidence="1">Purine metabolism; AMP biosynthesis via salvage pathway; AMP from adenine: step 1/1.</text>
</comment>
<comment type="subunit">
    <text evidence="1">Homodimer.</text>
</comment>
<comment type="subcellular location">
    <subcellularLocation>
        <location evidence="1">Cytoplasm</location>
    </subcellularLocation>
</comment>
<comment type="similarity">
    <text evidence="1">Belongs to the purine/pyrimidine phosphoribosyltransferase family.</text>
</comment>
<dbReference type="EC" id="2.4.2.7" evidence="1"/>
<dbReference type="EMBL" id="CP000029">
    <property type="protein sequence ID" value="AAW54577.1"/>
    <property type="molecule type" value="Genomic_DNA"/>
</dbReference>
<dbReference type="RefSeq" id="WP_001832698.1">
    <property type="nucleotide sequence ID" value="NC_002976.3"/>
</dbReference>
<dbReference type="SMR" id="Q5HNR6"/>
<dbReference type="STRING" id="176279.SERP1198"/>
<dbReference type="KEGG" id="ser:SERP1198"/>
<dbReference type="eggNOG" id="COG0503">
    <property type="taxonomic scope" value="Bacteria"/>
</dbReference>
<dbReference type="HOGENOM" id="CLU_063339_3_0_9"/>
<dbReference type="UniPathway" id="UPA00588">
    <property type="reaction ID" value="UER00646"/>
</dbReference>
<dbReference type="Proteomes" id="UP000000531">
    <property type="component" value="Chromosome"/>
</dbReference>
<dbReference type="GO" id="GO:0005737">
    <property type="term" value="C:cytoplasm"/>
    <property type="evidence" value="ECO:0007669"/>
    <property type="project" value="UniProtKB-SubCell"/>
</dbReference>
<dbReference type="GO" id="GO:0002055">
    <property type="term" value="F:adenine binding"/>
    <property type="evidence" value="ECO:0007669"/>
    <property type="project" value="TreeGrafter"/>
</dbReference>
<dbReference type="GO" id="GO:0003999">
    <property type="term" value="F:adenine phosphoribosyltransferase activity"/>
    <property type="evidence" value="ECO:0007669"/>
    <property type="project" value="UniProtKB-UniRule"/>
</dbReference>
<dbReference type="GO" id="GO:0016208">
    <property type="term" value="F:AMP binding"/>
    <property type="evidence" value="ECO:0007669"/>
    <property type="project" value="TreeGrafter"/>
</dbReference>
<dbReference type="GO" id="GO:0006168">
    <property type="term" value="P:adenine salvage"/>
    <property type="evidence" value="ECO:0007669"/>
    <property type="project" value="InterPro"/>
</dbReference>
<dbReference type="GO" id="GO:0044209">
    <property type="term" value="P:AMP salvage"/>
    <property type="evidence" value="ECO:0007669"/>
    <property type="project" value="UniProtKB-UniRule"/>
</dbReference>
<dbReference type="GO" id="GO:0006166">
    <property type="term" value="P:purine ribonucleoside salvage"/>
    <property type="evidence" value="ECO:0007669"/>
    <property type="project" value="UniProtKB-KW"/>
</dbReference>
<dbReference type="CDD" id="cd06223">
    <property type="entry name" value="PRTases_typeI"/>
    <property type="match status" value="1"/>
</dbReference>
<dbReference type="FunFam" id="3.40.50.2020:FF:000004">
    <property type="entry name" value="Adenine phosphoribosyltransferase"/>
    <property type="match status" value="1"/>
</dbReference>
<dbReference type="Gene3D" id="3.40.50.2020">
    <property type="match status" value="1"/>
</dbReference>
<dbReference type="HAMAP" id="MF_00004">
    <property type="entry name" value="Aden_phosphoribosyltr"/>
    <property type="match status" value="1"/>
</dbReference>
<dbReference type="InterPro" id="IPR005764">
    <property type="entry name" value="Ade_phspho_trans"/>
</dbReference>
<dbReference type="InterPro" id="IPR000836">
    <property type="entry name" value="PRibTrfase_dom"/>
</dbReference>
<dbReference type="InterPro" id="IPR029057">
    <property type="entry name" value="PRTase-like"/>
</dbReference>
<dbReference type="InterPro" id="IPR050054">
    <property type="entry name" value="UPRTase/APRTase"/>
</dbReference>
<dbReference type="NCBIfam" id="TIGR01090">
    <property type="entry name" value="apt"/>
    <property type="match status" value="1"/>
</dbReference>
<dbReference type="NCBIfam" id="NF002633">
    <property type="entry name" value="PRK02304.1-2"/>
    <property type="match status" value="1"/>
</dbReference>
<dbReference type="NCBIfam" id="NF002634">
    <property type="entry name" value="PRK02304.1-3"/>
    <property type="match status" value="1"/>
</dbReference>
<dbReference type="NCBIfam" id="NF002636">
    <property type="entry name" value="PRK02304.1-5"/>
    <property type="match status" value="1"/>
</dbReference>
<dbReference type="PANTHER" id="PTHR32315">
    <property type="entry name" value="ADENINE PHOSPHORIBOSYLTRANSFERASE"/>
    <property type="match status" value="1"/>
</dbReference>
<dbReference type="PANTHER" id="PTHR32315:SF3">
    <property type="entry name" value="ADENINE PHOSPHORIBOSYLTRANSFERASE"/>
    <property type="match status" value="1"/>
</dbReference>
<dbReference type="Pfam" id="PF00156">
    <property type="entry name" value="Pribosyltran"/>
    <property type="match status" value="1"/>
</dbReference>
<dbReference type="SUPFAM" id="SSF53271">
    <property type="entry name" value="PRTase-like"/>
    <property type="match status" value="1"/>
</dbReference>
<gene>
    <name evidence="1" type="primary">apt</name>
    <name type="ordered locus">SERP1198</name>
</gene>
<proteinExistence type="inferred from homology"/>
<evidence type="ECO:0000255" key="1">
    <source>
        <dbReference type="HAMAP-Rule" id="MF_00004"/>
    </source>
</evidence>
<sequence>MDLKQYVSEVKDWPSAGVSFKDITTIMDNGEAYGYATDQIVEYAKEKNIDIVVGPEARGFIIGCPVAYSMGIGFAPVRKEGKLPREVIRYEYNLEYGTNVLTMHKDAIKPGQRVLITDDLLATGGTIEAAIKLVEQLGGIVVGIAFIIELKYLNGIDKIKDYDVMSLISYDE</sequence>
<protein>
    <recommendedName>
        <fullName evidence="1">Adenine phosphoribosyltransferase</fullName>
        <shortName evidence="1">APRT</shortName>
        <ecNumber evidence="1">2.4.2.7</ecNumber>
    </recommendedName>
</protein>
<keyword id="KW-0963">Cytoplasm</keyword>
<keyword id="KW-0328">Glycosyltransferase</keyword>
<keyword id="KW-0660">Purine salvage</keyword>
<keyword id="KW-1185">Reference proteome</keyword>
<keyword id="KW-0808">Transferase</keyword>